<gene>
    <name evidence="1" type="primary">kefB</name>
    <name type="ordered locus">YPK_0266</name>
</gene>
<organism>
    <name type="scientific">Yersinia pseudotuberculosis serotype O:3 (strain YPIII)</name>
    <dbReference type="NCBI Taxonomy" id="502800"/>
    <lineage>
        <taxon>Bacteria</taxon>
        <taxon>Pseudomonadati</taxon>
        <taxon>Pseudomonadota</taxon>
        <taxon>Gammaproteobacteria</taxon>
        <taxon>Enterobacterales</taxon>
        <taxon>Yersiniaceae</taxon>
        <taxon>Yersinia</taxon>
    </lineage>
</organism>
<accession>B1JIU4</accession>
<keyword id="KW-0050">Antiport</keyword>
<keyword id="KW-0997">Cell inner membrane</keyword>
<keyword id="KW-1003">Cell membrane</keyword>
<keyword id="KW-0406">Ion transport</keyword>
<keyword id="KW-0472">Membrane</keyword>
<keyword id="KW-0630">Potassium</keyword>
<keyword id="KW-0633">Potassium transport</keyword>
<keyword id="KW-0812">Transmembrane</keyword>
<keyword id="KW-1133">Transmembrane helix</keyword>
<keyword id="KW-0813">Transport</keyword>
<comment type="function">
    <text evidence="1">Pore-forming subunit of a potassium efflux system that confers protection against electrophiles. Catalyzes K(+)/H(+) antiport.</text>
</comment>
<comment type="subunit">
    <text evidence="1">Interacts with the regulatory subunit KefG.</text>
</comment>
<comment type="subcellular location">
    <subcellularLocation>
        <location evidence="1">Cell inner membrane</location>
        <topology evidence="1">Multi-pass membrane protein</topology>
    </subcellularLocation>
</comment>
<comment type="similarity">
    <text evidence="1">Belongs to the monovalent cation:proton antiporter 2 (CPA2) transporter (TC 2.A.37) family. KefB subfamily.</text>
</comment>
<evidence type="ECO:0000255" key="1">
    <source>
        <dbReference type="HAMAP-Rule" id="MF_01412"/>
    </source>
</evidence>
<evidence type="ECO:0000255" key="2">
    <source>
        <dbReference type="PROSITE-ProRule" id="PRU00543"/>
    </source>
</evidence>
<proteinExistence type="inferred from homology"/>
<reference key="1">
    <citation type="submission" date="2008-02" db="EMBL/GenBank/DDBJ databases">
        <title>Complete sequence of Yersinia pseudotuberculosis YPIII.</title>
        <authorList>
            <consortium name="US DOE Joint Genome Institute"/>
            <person name="Copeland A."/>
            <person name="Lucas S."/>
            <person name="Lapidus A."/>
            <person name="Glavina del Rio T."/>
            <person name="Dalin E."/>
            <person name="Tice H."/>
            <person name="Bruce D."/>
            <person name="Goodwin L."/>
            <person name="Pitluck S."/>
            <person name="Munk A.C."/>
            <person name="Brettin T."/>
            <person name="Detter J.C."/>
            <person name="Han C."/>
            <person name="Tapia R."/>
            <person name="Schmutz J."/>
            <person name="Larimer F."/>
            <person name="Land M."/>
            <person name="Hauser L."/>
            <person name="Challacombe J.F."/>
            <person name="Green L."/>
            <person name="Lindler L.E."/>
            <person name="Nikolich M.P."/>
            <person name="Richardson P."/>
        </authorList>
    </citation>
    <scope>NUCLEOTIDE SEQUENCE [LARGE SCALE GENOMIC DNA]</scope>
    <source>
        <strain>YPIII</strain>
    </source>
</reference>
<sequence length="602" mass="66328">MEGTGLLTAVLVFLFAAVVAVPIAQRLGIGAVLGYLIAGIAIGPWGLGFIRDVDEILHFSELGVVFLMFIIGLELNPAKLWQLRRSIFGVGAGQVVITAAVLGALLYFTQFAWQAAVIGGVGLAMSSTAMALQLMREKGMNRNEGGQLGFSVLLFQDMAVIPALALIPILAGNEGGANDWVKIGLKIAAFAGMLIGGRYLLRPLFRYIVASGVREVFTAAALLVVLGSALFMDALGLSMALGTFIAGILLAESEFQHELEIAIEPFKGLLLGLFFISVGMALDLGVLFTHLLDVLLGVLALVFIKSAILYGLARVFGLRRSVRLQFAGVLSQGGEFAFVLFSAAFSQRVLNAEQLALLLVVVTLSMMTTPLLMQVIDRILVRRYNAQEESDEKPFVEDNDPQVIIVGFGRFGQVIGRLLMANKMRITVLERDVSAVSMMRKYGYKVYYGDATELELLRAAGAEKAKAIVITCNEPEDTMALVHLCQQHFPNLHILARARGRVEAHELLQNGVKDFTRETFSSALELGRKTLLELGMHPHQAYRAQQHFRRLDMRMLRELMPQHHGDVAQISRIKEARRELEDIFQREMLHESRQLDGWDEYE</sequence>
<dbReference type="EMBL" id="CP000950">
    <property type="protein sequence ID" value="ACA66579.1"/>
    <property type="molecule type" value="Genomic_DNA"/>
</dbReference>
<dbReference type="RefSeq" id="WP_002212314.1">
    <property type="nucleotide sequence ID" value="NZ_CP009792.1"/>
</dbReference>
<dbReference type="SMR" id="B1JIU4"/>
<dbReference type="GeneID" id="57974412"/>
<dbReference type="KEGG" id="ypy:YPK_0266"/>
<dbReference type="PATRIC" id="fig|502800.11.peg.872"/>
<dbReference type="GO" id="GO:0005886">
    <property type="term" value="C:plasma membrane"/>
    <property type="evidence" value="ECO:0007669"/>
    <property type="project" value="UniProtKB-SubCell"/>
</dbReference>
<dbReference type="GO" id="GO:0015503">
    <property type="term" value="F:glutathione-regulated potassium exporter activity"/>
    <property type="evidence" value="ECO:0007669"/>
    <property type="project" value="UniProtKB-UniRule"/>
</dbReference>
<dbReference type="GO" id="GO:1902600">
    <property type="term" value="P:proton transmembrane transport"/>
    <property type="evidence" value="ECO:0007669"/>
    <property type="project" value="InterPro"/>
</dbReference>
<dbReference type="FunFam" id="1.20.1530.20:FF:000001">
    <property type="entry name" value="Glutathione-regulated potassium-efflux system protein KefB"/>
    <property type="match status" value="1"/>
</dbReference>
<dbReference type="FunFam" id="3.40.50.720:FF:000036">
    <property type="entry name" value="Glutathione-regulated potassium-efflux system protein KefB"/>
    <property type="match status" value="1"/>
</dbReference>
<dbReference type="Gene3D" id="1.20.1530.20">
    <property type="match status" value="1"/>
</dbReference>
<dbReference type="Gene3D" id="3.40.50.720">
    <property type="entry name" value="NAD(P)-binding Rossmann-like Domain"/>
    <property type="match status" value="1"/>
</dbReference>
<dbReference type="HAMAP" id="MF_01412">
    <property type="entry name" value="K_H_efflux_KefB"/>
    <property type="match status" value="1"/>
</dbReference>
<dbReference type="InterPro" id="IPR006153">
    <property type="entry name" value="Cation/H_exchanger_TM"/>
</dbReference>
<dbReference type="InterPro" id="IPR004771">
    <property type="entry name" value="K/H_exchanger"/>
</dbReference>
<dbReference type="InterPro" id="IPR020884">
    <property type="entry name" value="K_H_efflux_KefB"/>
</dbReference>
<dbReference type="InterPro" id="IPR038770">
    <property type="entry name" value="Na+/solute_symporter_sf"/>
</dbReference>
<dbReference type="InterPro" id="IPR036291">
    <property type="entry name" value="NAD(P)-bd_dom_sf"/>
</dbReference>
<dbReference type="InterPro" id="IPR003148">
    <property type="entry name" value="RCK_N"/>
</dbReference>
<dbReference type="NCBIfam" id="TIGR00932">
    <property type="entry name" value="2a37"/>
    <property type="match status" value="1"/>
</dbReference>
<dbReference type="NCBIfam" id="NF002973">
    <property type="entry name" value="PRK03659.1"/>
    <property type="match status" value="1"/>
</dbReference>
<dbReference type="PANTHER" id="PTHR46157">
    <property type="entry name" value="K(+) EFFLUX ANTIPORTER 3, CHLOROPLASTIC"/>
    <property type="match status" value="1"/>
</dbReference>
<dbReference type="PANTHER" id="PTHR46157:SF4">
    <property type="entry name" value="K(+) EFFLUX ANTIPORTER 3, CHLOROPLASTIC"/>
    <property type="match status" value="1"/>
</dbReference>
<dbReference type="Pfam" id="PF00999">
    <property type="entry name" value="Na_H_Exchanger"/>
    <property type="match status" value="1"/>
</dbReference>
<dbReference type="Pfam" id="PF02254">
    <property type="entry name" value="TrkA_N"/>
    <property type="match status" value="1"/>
</dbReference>
<dbReference type="SUPFAM" id="SSF51735">
    <property type="entry name" value="NAD(P)-binding Rossmann-fold domains"/>
    <property type="match status" value="1"/>
</dbReference>
<dbReference type="PROSITE" id="PS51201">
    <property type="entry name" value="RCK_N"/>
    <property type="match status" value="1"/>
</dbReference>
<name>KEFB_YERPY</name>
<feature type="chain" id="PRO_1000145534" description="Glutathione-regulated potassium-efflux system protein KefB">
    <location>
        <begin position="1"/>
        <end position="602"/>
    </location>
</feature>
<feature type="transmembrane region" description="Helical" evidence="1">
    <location>
        <begin position="4"/>
        <end position="24"/>
    </location>
</feature>
<feature type="transmembrane region" description="Helical" evidence="1">
    <location>
        <begin position="29"/>
        <end position="49"/>
    </location>
</feature>
<feature type="transmembrane region" description="Helical" evidence="1">
    <location>
        <begin position="55"/>
        <end position="75"/>
    </location>
</feature>
<feature type="transmembrane region" description="Helical" evidence="1">
    <location>
        <begin position="87"/>
        <end position="107"/>
    </location>
</feature>
<feature type="transmembrane region" description="Helical" evidence="1">
    <location>
        <begin position="115"/>
        <end position="135"/>
    </location>
</feature>
<feature type="transmembrane region" description="Helical" evidence="1">
    <location>
        <begin position="152"/>
        <end position="172"/>
    </location>
</feature>
<feature type="transmembrane region" description="Helical" evidence="1">
    <location>
        <begin position="181"/>
        <end position="201"/>
    </location>
</feature>
<feature type="transmembrane region" description="Helical" evidence="1">
    <location>
        <begin position="207"/>
        <end position="227"/>
    </location>
</feature>
<feature type="transmembrane region" description="Helical" evidence="1">
    <location>
        <begin position="230"/>
        <end position="250"/>
    </location>
</feature>
<feature type="transmembrane region" description="Helical" evidence="1">
    <location>
        <begin position="261"/>
        <end position="281"/>
    </location>
</feature>
<feature type="transmembrane region" description="Helical" evidence="1">
    <location>
        <begin position="296"/>
        <end position="318"/>
    </location>
</feature>
<feature type="transmembrane region" description="Helical" evidence="1">
    <location>
        <begin position="326"/>
        <end position="346"/>
    </location>
</feature>
<feature type="transmembrane region" description="Helical" evidence="1">
    <location>
        <begin position="356"/>
        <end position="376"/>
    </location>
</feature>
<feature type="domain" description="RCK N-terminal" evidence="2">
    <location>
        <begin position="400"/>
        <end position="519"/>
    </location>
</feature>
<protein>
    <recommendedName>
        <fullName evidence="1">Glutathione-regulated potassium-efflux system protein KefB</fullName>
    </recommendedName>
    <alternativeName>
        <fullName evidence="1">K(+)/H(+) antiporter</fullName>
    </alternativeName>
</protein>